<keyword id="KW-0119">Carbohydrate metabolism</keyword>
<keyword id="KW-0378">Hydrolase</keyword>
<keyword id="KW-0460">Magnesium</keyword>
<keyword id="KW-0479">Metal-binding</keyword>
<keyword id="KW-1185">Reference proteome</keyword>
<evidence type="ECO:0000250" key="1"/>
<evidence type="ECO:0000250" key="2">
    <source>
        <dbReference type="UniProtKB" id="Q57573"/>
    </source>
</evidence>
<evidence type="ECO:0000305" key="3"/>
<comment type="function">
    <text evidence="2">Phosphatase with broad specificity; it can dephosphorylate fructose 1,6-bisphosphate, and both D and L isomers of inositol-1-phosphate (I-1-P).</text>
</comment>
<comment type="catalytic activity">
    <reaction evidence="2">
        <text>beta-D-fructose 1,6-bisphosphate + H2O = beta-D-fructose 6-phosphate + phosphate</text>
        <dbReference type="Rhea" id="RHEA:11064"/>
        <dbReference type="ChEBI" id="CHEBI:15377"/>
        <dbReference type="ChEBI" id="CHEBI:32966"/>
        <dbReference type="ChEBI" id="CHEBI:43474"/>
        <dbReference type="ChEBI" id="CHEBI:57634"/>
        <dbReference type="EC" id="3.1.3.11"/>
    </reaction>
</comment>
<comment type="catalytic activity">
    <reaction evidence="2">
        <text>a myo-inositol phosphate + H2O = myo-inositol + phosphate</text>
        <dbReference type="Rhea" id="RHEA:24056"/>
        <dbReference type="ChEBI" id="CHEBI:15377"/>
        <dbReference type="ChEBI" id="CHEBI:17268"/>
        <dbReference type="ChEBI" id="CHEBI:43474"/>
        <dbReference type="ChEBI" id="CHEBI:84139"/>
        <dbReference type="EC" id="3.1.3.25"/>
    </reaction>
</comment>
<comment type="cofactor">
    <cofactor evidence="1">
        <name>Mg(2+)</name>
        <dbReference type="ChEBI" id="CHEBI:18420"/>
    </cofactor>
</comment>
<comment type="similarity">
    <text evidence="3">Belongs to the inositol monophosphatase superfamily. FBPase class 4 family.</text>
</comment>
<gene>
    <name type="primary">suhB</name>
    <name type="ordered locus">MTH_871</name>
</gene>
<protein>
    <recommendedName>
        <fullName>Fructose-1,6-bisphosphatase/inositol-1-monophosphatase</fullName>
        <shortName>FBPase/IMPase</shortName>
        <ecNumber evidence="2">3.1.3.11</ecNumber>
        <ecNumber evidence="2">3.1.3.25</ecNumber>
    </recommendedName>
    <alternativeName>
        <fullName>Inositol-1-phosphatase</fullName>
        <shortName>I-1-Pase</shortName>
    </alternativeName>
</protein>
<accession>O26957</accession>
<proteinExistence type="inferred from homology"/>
<sequence length="280" mass="30173">MEESDIYYWKGVAVRMAEQVERAVSPLVGTEDAGEIIKMGADGTPTKLIDLVAEDEAVGVLESTGRPVTIISEEIGVLHINSEGDEPGIIFVVDPLDGTSNAIRNIPFYGISVAVAERHPDGAAPTLNNVLMGFVKNFATGDLYWAIKGQGAFLNEKAISSSSQSSLDRTSLGAFIYGTRFRRVDSICRVIRRMRILGSVALELAYVASGSYDAFMDLRENLRIVDIAASKLIVEEAGGVVTNERGGEIDGLLNVKARTSLVAAGNLELHEKIMQTLEVI</sequence>
<feature type="chain" id="PRO_0000142581" description="Fructose-1,6-bisphosphatase/inositol-1-monophosphatase">
    <location>
        <begin position="1"/>
        <end position="280"/>
    </location>
</feature>
<feature type="binding site" evidence="1">
    <location>
        <position position="73"/>
    </location>
    <ligand>
        <name>Mg(2+)</name>
        <dbReference type="ChEBI" id="CHEBI:18420"/>
        <label>1</label>
    </ligand>
</feature>
<feature type="binding site" evidence="1">
    <location>
        <position position="94"/>
    </location>
    <ligand>
        <name>Mg(2+)</name>
        <dbReference type="ChEBI" id="CHEBI:18420"/>
        <label>1</label>
    </ligand>
</feature>
<feature type="binding site" evidence="1">
    <location>
        <position position="94"/>
    </location>
    <ligand>
        <name>Mg(2+)</name>
        <dbReference type="ChEBI" id="CHEBI:18420"/>
        <label>2</label>
    </ligand>
</feature>
<feature type="binding site" evidence="1">
    <location>
        <position position="96"/>
    </location>
    <ligand>
        <name>Mg(2+)</name>
        <dbReference type="ChEBI" id="CHEBI:18420"/>
        <label>1</label>
    </ligand>
</feature>
<feature type="binding site" evidence="1">
    <location>
        <begin position="97"/>
        <end position="99"/>
    </location>
    <ligand>
        <name>substrate</name>
    </ligand>
</feature>
<feature type="binding site" evidence="1">
    <location>
        <position position="97"/>
    </location>
    <ligand>
        <name>Mg(2+)</name>
        <dbReference type="ChEBI" id="CHEBI:18420"/>
        <label>2</label>
    </ligand>
</feature>
<feature type="binding site" evidence="1">
    <location>
        <position position="195"/>
    </location>
    <ligand>
        <name>substrate</name>
    </ligand>
</feature>
<feature type="binding site" evidence="1">
    <location>
        <position position="200"/>
    </location>
    <ligand>
        <name>substrate</name>
    </ligand>
</feature>
<feature type="binding site" evidence="1">
    <location>
        <position position="219"/>
    </location>
    <ligand>
        <name>substrate</name>
    </ligand>
</feature>
<feature type="binding site" evidence="1">
    <location>
        <position position="226"/>
    </location>
    <ligand>
        <name>Mg(2+)</name>
        <dbReference type="ChEBI" id="CHEBI:18420"/>
        <label>2</label>
    </ligand>
</feature>
<reference key="1">
    <citation type="journal article" date="1997" name="J. Bacteriol.">
        <title>Complete genome sequence of Methanobacterium thermoautotrophicum deltaH: functional analysis and comparative genomics.</title>
        <authorList>
            <person name="Smith D.R."/>
            <person name="Doucette-Stamm L.A."/>
            <person name="Deloughery C."/>
            <person name="Lee H.-M."/>
            <person name="Dubois J."/>
            <person name="Aldredge T."/>
            <person name="Bashirzadeh R."/>
            <person name="Blakely D."/>
            <person name="Cook R."/>
            <person name="Gilbert K."/>
            <person name="Harrison D."/>
            <person name="Hoang L."/>
            <person name="Keagle P."/>
            <person name="Lumm W."/>
            <person name="Pothier B."/>
            <person name="Qiu D."/>
            <person name="Spadafora R."/>
            <person name="Vicare R."/>
            <person name="Wang Y."/>
            <person name="Wierzbowski J."/>
            <person name="Gibson R."/>
            <person name="Jiwani N."/>
            <person name="Caruso A."/>
            <person name="Bush D."/>
            <person name="Safer H."/>
            <person name="Patwell D."/>
            <person name="Prabhakar S."/>
            <person name="McDougall S."/>
            <person name="Shimer G."/>
            <person name="Goyal A."/>
            <person name="Pietrovski S."/>
            <person name="Church G.M."/>
            <person name="Daniels C.J."/>
            <person name="Mao J.-I."/>
            <person name="Rice P."/>
            <person name="Noelling J."/>
            <person name="Reeve J.N."/>
        </authorList>
    </citation>
    <scope>NUCLEOTIDE SEQUENCE [LARGE SCALE GENOMIC DNA]</scope>
    <source>
        <strain>ATCC 29096 / DSM 1053 / JCM 10044 / NBRC 100330 / Delta H</strain>
    </source>
</reference>
<organism>
    <name type="scientific">Methanothermobacter thermautotrophicus (strain ATCC 29096 / DSM 1053 / JCM 10044 / NBRC 100330 / Delta H)</name>
    <name type="common">Methanobacterium thermoautotrophicum</name>
    <dbReference type="NCBI Taxonomy" id="187420"/>
    <lineage>
        <taxon>Archaea</taxon>
        <taxon>Methanobacteriati</taxon>
        <taxon>Methanobacteriota</taxon>
        <taxon>Methanomada group</taxon>
        <taxon>Methanobacteria</taxon>
        <taxon>Methanobacteriales</taxon>
        <taxon>Methanobacteriaceae</taxon>
        <taxon>Methanothermobacter</taxon>
    </lineage>
</organism>
<name>BSUHB_METTH</name>
<dbReference type="EC" id="3.1.3.11" evidence="2"/>
<dbReference type="EC" id="3.1.3.25" evidence="2"/>
<dbReference type="EMBL" id="AE000666">
    <property type="protein sequence ID" value="AAB85369.1"/>
    <property type="molecule type" value="Genomic_DNA"/>
</dbReference>
<dbReference type="PIR" id="D69216">
    <property type="entry name" value="D69216"/>
</dbReference>
<dbReference type="RefSeq" id="WP_010876504.1">
    <property type="nucleotide sequence ID" value="NC_000916.1"/>
</dbReference>
<dbReference type="SMR" id="O26957"/>
<dbReference type="FunCoup" id="O26957">
    <property type="interactions" value="42"/>
</dbReference>
<dbReference type="STRING" id="187420.MTH_871"/>
<dbReference type="PaxDb" id="187420-MTH_871"/>
<dbReference type="EnsemblBacteria" id="AAB85369">
    <property type="protein sequence ID" value="AAB85369"/>
    <property type="gene ID" value="MTH_871"/>
</dbReference>
<dbReference type="GeneID" id="1471279"/>
<dbReference type="KEGG" id="mth:MTH_871"/>
<dbReference type="PATRIC" id="fig|187420.15.peg.855"/>
<dbReference type="HOGENOM" id="CLU_044118_5_0_2"/>
<dbReference type="InParanoid" id="O26957"/>
<dbReference type="Proteomes" id="UP000005223">
    <property type="component" value="Chromosome"/>
</dbReference>
<dbReference type="GO" id="GO:0042132">
    <property type="term" value="F:fructose 1,6-bisphosphate 1-phosphatase activity"/>
    <property type="evidence" value="ECO:0007669"/>
    <property type="project" value="UniProtKB-EC"/>
</dbReference>
<dbReference type="GO" id="GO:0008934">
    <property type="term" value="F:inositol monophosphate 1-phosphatase activity"/>
    <property type="evidence" value="ECO:0007669"/>
    <property type="project" value="TreeGrafter"/>
</dbReference>
<dbReference type="GO" id="GO:0046872">
    <property type="term" value="F:metal ion binding"/>
    <property type="evidence" value="ECO:0007669"/>
    <property type="project" value="UniProtKB-KW"/>
</dbReference>
<dbReference type="GO" id="GO:0006020">
    <property type="term" value="P:inositol metabolic process"/>
    <property type="evidence" value="ECO:0007669"/>
    <property type="project" value="TreeGrafter"/>
</dbReference>
<dbReference type="GO" id="GO:0046854">
    <property type="term" value="P:phosphatidylinositol phosphate biosynthetic process"/>
    <property type="evidence" value="ECO:0007669"/>
    <property type="project" value="InterPro"/>
</dbReference>
<dbReference type="GO" id="GO:0007165">
    <property type="term" value="P:signal transduction"/>
    <property type="evidence" value="ECO:0007669"/>
    <property type="project" value="TreeGrafter"/>
</dbReference>
<dbReference type="CDD" id="cd01515">
    <property type="entry name" value="Arch_FBPase_1"/>
    <property type="match status" value="1"/>
</dbReference>
<dbReference type="FunFam" id="3.30.540.10:FF:000027">
    <property type="entry name" value="Fructose-1,6-bisphosphatase/inositol-1-monophosphatase"/>
    <property type="match status" value="1"/>
</dbReference>
<dbReference type="FunFam" id="3.40.190.80:FF:000020">
    <property type="entry name" value="Fructose-1,6-bisphosphatase/inositol-1-monophosphatase"/>
    <property type="match status" value="1"/>
</dbReference>
<dbReference type="Gene3D" id="3.40.190.80">
    <property type="match status" value="1"/>
</dbReference>
<dbReference type="Gene3D" id="3.30.540.10">
    <property type="entry name" value="Fructose-1,6-Bisphosphatase, subunit A, domain 1"/>
    <property type="match status" value="1"/>
</dbReference>
<dbReference type="InterPro" id="IPR020583">
    <property type="entry name" value="Inositol_monoP_metal-BS"/>
</dbReference>
<dbReference type="InterPro" id="IPR000760">
    <property type="entry name" value="Inositol_monophosphatase-like"/>
</dbReference>
<dbReference type="InterPro" id="IPR020550">
    <property type="entry name" value="Inositol_monophosphatase_CS"/>
</dbReference>
<dbReference type="NCBIfam" id="NF009321">
    <property type="entry name" value="PRK12676.1"/>
    <property type="match status" value="1"/>
</dbReference>
<dbReference type="PANTHER" id="PTHR20854">
    <property type="entry name" value="INOSITOL MONOPHOSPHATASE"/>
    <property type="match status" value="1"/>
</dbReference>
<dbReference type="PANTHER" id="PTHR20854:SF4">
    <property type="entry name" value="INOSITOL-1-MONOPHOSPHATASE-RELATED"/>
    <property type="match status" value="1"/>
</dbReference>
<dbReference type="Pfam" id="PF00459">
    <property type="entry name" value="Inositol_P"/>
    <property type="match status" value="1"/>
</dbReference>
<dbReference type="PRINTS" id="PR00377">
    <property type="entry name" value="IMPHPHTASES"/>
</dbReference>
<dbReference type="SUPFAM" id="SSF56655">
    <property type="entry name" value="Carbohydrate phosphatase"/>
    <property type="match status" value="1"/>
</dbReference>
<dbReference type="PROSITE" id="PS00629">
    <property type="entry name" value="IMP_1"/>
    <property type="match status" value="1"/>
</dbReference>
<dbReference type="PROSITE" id="PS00630">
    <property type="entry name" value="IMP_2"/>
    <property type="match status" value="1"/>
</dbReference>